<proteinExistence type="inferred from homology"/>
<organism>
    <name type="scientific">Emiliania huxleyi</name>
    <name type="common">Coccolithophore</name>
    <name type="synonym">Pontosphaera huxleyi</name>
    <dbReference type="NCBI Taxonomy" id="2903"/>
    <lineage>
        <taxon>Eukaryota</taxon>
        <taxon>Haptista</taxon>
        <taxon>Haptophyta</taxon>
        <taxon>Prymnesiophyceae</taxon>
        <taxon>Isochrysidales</taxon>
        <taxon>Noelaerhabdaceae</taxon>
        <taxon>Emiliania</taxon>
    </lineage>
</organism>
<name>PSAA_EMIHU</name>
<feature type="chain" id="PRO_0000275969" description="Photosystem I P700 chlorophyll a apoprotein A1">
    <location>
        <begin position="1"/>
        <end position="752"/>
    </location>
</feature>
<feature type="transmembrane region" description="Helical; Name=I" evidence="1">
    <location>
        <begin position="73"/>
        <end position="96"/>
    </location>
</feature>
<feature type="transmembrane region" description="Helical; Name=II" evidence="1">
    <location>
        <begin position="159"/>
        <end position="182"/>
    </location>
</feature>
<feature type="transmembrane region" description="Helical; Name=III" evidence="1">
    <location>
        <begin position="198"/>
        <end position="222"/>
    </location>
</feature>
<feature type="transmembrane region" description="Helical; Name=IV" evidence="1">
    <location>
        <begin position="294"/>
        <end position="312"/>
    </location>
</feature>
<feature type="transmembrane region" description="Helical; Name=V" evidence="1">
    <location>
        <begin position="349"/>
        <end position="372"/>
    </location>
</feature>
<feature type="transmembrane region" description="Helical; Name=VI" evidence="1">
    <location>
        <begin position="388"/>
        <end position="414"/>
    </location>
</feature>
<feature type="transmembrane region" description="Helical; Name=VII" evidence="1">
    <location>
        <begin position="436"/>
        <end position="458"/>
    </location>
</feature>
<feature type="transmembrane region" description="Helical; Name=VIII" evidence="1">
    <location>
        <begin position="533"/>
        <end position="551"/>
    </location>
</feature>
<feature type="transmembrane region" description="Helical; Name=IX" evidence="1">
    <location>
        <begin position="591"/>
        <end position="612"/>
    </location>
</feature>
<feature type="transmembrane region" description="Helical; Name=X" evidence="1">
    <location>
        <begin position="666"/>
        <end position="688"/>
    </location>
</feature>
<feature type="transmembrane region" description="Helical; Name=XI" evidence="1">
    <location>
        <begin position="726"/>
        <end position="746"/>
    </location>
</feature>
<feature type="binding site" evidence="1">
    <location>
        <position position="575"/>
    </location>
    <ligand>
        <name>[4Fe-4S] cluster</name>
        <dbReference type="ChEBI" id="CHEBI:49883"/>
        <note>ligand shared between dimeric partners</note>
    </ligand>
</feature>
<feature type="binding site" evidence="1">
    <location>
        <position position="584"/>
    </location>
    <ligand>
        <name>[4Fe-4S] cluster</name>
        <dbReference type="ChEBI" id="CHEBI:49883"/>
        <note>ligand shared between dimeric partners</note>
    </ligand>
</feature>
<feature type="binding site" description="axial binding residue" evidence="1">
    <location>
        <position position="677"/>
    </location>
    <ligand>
        <name>chlorophyll a'</name>
        <dbReference type="ChEBI" id="CHEBI:189419"/>
        <label>A1</label>
    </ligand>
    <ligandPart>
        <name>Mg</name>
        <dbReference type="ChEBI" id="CHEBI:25107"/>
    </ligandPart>
</feature>
<feature type="binding site" description="axial binding residue" evidence="1">
    <location>
        <position position="685"/>
    </location>
    <ligand>
        <name>chlorophyll a</name>
        <dbReference type="ChEBI" id="CHEBI:58416"/>
        <label>A3</label>
    </ligand>
    <ligandPart>
        <name>Mg</name>
        <dbReference type="ChEBI" id="CHEBI:25107"/>
    </ligandPart>
</feature>
<feature type="binding site" evidence="1">
    <location>
        <position position="693"/>
    </location>
    <ligand>
        <name>chlorophyll a</name>
        <dbReference type="ChEBI" id="CHEBI:58416"/>
        <label>A3</label>
    </ligand>
</feature>
<feature type="binding site" evidence="1">
    <location>
        <position position="694"/>
    </location>
    <ligand>
        <name>phylloquinone</name>
        <dbReference type="ChEBI" id="CHEBI:18067"/>
        <label>A</label>
    </ligand>
</feature>
<sequence length="752" mass="83559">MKVGSKELEASKVRVIVDKDPVATSFEKWAQPGHFSRTLAKGPKTTTWIWNLHADAHDFDSQTSSLEDISRKIFSAHFGQLAIIFLWVSQAYFHGARFSNYSAWLLNPTSIKPSAQVVWPVVGQEILNGDVGGGFSGVQITSGVFQMWRASGITNETELYWTAMGGLMMSALMVFAGWFHYHKAAPKLEWFQNVESMMNHHLAGLLGLGCLSWSGHQIHISLPINKLLDAGVAPQEIPLPHELLFNQDLMAQLYPSFKKGLLPFFTLNWGEYSDFLTFKGGLNPITGSLWLSDTAHHHLALAVLFIFAGHMYRTNWGIGHSMKEILEAHKGPLTGEGHKGLYEILTTSWHAQLAINLAMMGSLSIIVAHHMYAMPPYPYIAVDYPTQLSLFTHHMWIGGFCVCGAAAHGAIFMVRDYSPVQSYNNLLDRVLRHRDAIISHLNWVCIFLGTHSFGLYIHNDTMRALGRPQDMFSDKAIQLQPIFAKWVQSLHTLAPGNTAPNSLATASYAFGGDVVAVNGKIAMMPIQLGTADFLVHHIHAFTIHVTVLILLKGVLFARSSRLIPDKANLGFRFPCDGPGRGGTCQVSAWDHIFLGLFWMYNCISVVIFHFSWKMQSDVWGTISEKGKITHITGGNFANSALTINGWLRDFLWSQASQVIQSYGSALSAYGIIFLGAHFIWAFSLMFLFSGRGYWQELIESVVWAHNKLKLAPAIQPRALSITQGRAVGLAHYLLGGIGTTWSFFLARIISVG</sequence>
<dbReference type="EC" id="1.97.1.12" evidence="1"/>
<dbReference type="EMBL" id="AY675520">
    <property type="protein sequence ID" value="AAU81902.1"/>
    <property type="molecule type" value="Genomic_DNA"/>
</dbReference>
<dbReference type="EMBL" id="AY741371">
    <property type="protein sequence ID" value="AAX13810.1"/>
    <property type="molecule type" value="Genomic_DNA"/>
</dbReference>
<dbReference type="RefSeq" id="YP_277311.1">
    <property type="nucleotide sequence ID" value="NC_007288.1"/>
</dbReference>
<dbReference type="SMR" id="Q4G3F6"/>
<dbReference type="STRING" id="2903.Q4G3F6"/>
<dbReference type="GeneID" id="3562545"/>
<dbReference type="GO" id="GO:0009535">
    <property type="term" value="C:chloroplast thylakoid membrane"/>
    <property type="evidence" value="ECO:0007669"/>
    <property type="project" value="UniProtKB-SubCell"/>
</dbReference>
<dbReference type="GO" id="GO:0009522">
    <property type="term" value="C:photosystem I"/>
    <property type="evidence" value="ECO:0007669"/>
    <property type="project" value="UniProtKB-KW"/>
</dbReference>
<dbReference type="GO" id="GO:0051539">
    <property type="term" value="F:4 iron, 4 sulfur cluster binding"/>
    <property type="evidence" value="ECO:0007669"/>
    <property type="project" value="UniProtKB-KW"/>
</dbReference>
<dbReference type="GO" id="GO:0016168">
    <property type="term" value="F:chlorophyll binding"/>
    <property type="evidence" value="ECO:0007669"/>
    <property type="project" value="UniProtKB-KW"/>
</dbReference>
<dbReference type="GO" id="GO:0009055">
    <property type="term" value="F:electron transfer activity"/>
    <property type="evidence" value="ECO:0007669"/>
    <property type="project" value="UniProtKB-UniRule"/>
</dbReference>
<dbReference type="GO" id="GO:0000287">
    <property type="term" value="F:magnesium ion binding"/>
    <property type="evidence" value="ECO:0007669"/>
    <property type="project" value="UniProtKB-UniRule"/>
</dbReference>
<dbReference type="GO" id="GO:0016491">
    <property type="term" value="F:oxidoreductase activity"/>
    <property type="evidence" value="ECO:0007669"/>
    <property type="project" value="UniProtKB-KW"/>
</dbReference>
<dbReference type="GO" id="GO:0015979">
    <property type="term" value="P:photosynthesis"/>
    <property type="evidence" value="ECO:0007669"/>
    <property type="project" value="UniProtKB-UniRule"/>
</dbReference>
<dbReference type="Gene3D" id="1.20.1130.10">
    <property type="entry name" value="Photosystem I PsaA/PsaB"/>
    <property type="match status" value="1"/>
</dbReference>
<dbReference type="HAMAP" id="MF_00458">
    <property type="entry name" value="PSI_PsaA"/>
    <property type="match status" value="1"/>
</dbReference>
<dbReference type="InterPro" id="IPR006243">
    <property type="entry name" value="PSI_PsaA"/>
</dbReference>
<dbReference type="InterPro" id="IPR001280">
    <property type="entry name" value="PSI_PsaA/B"/>
</dbReference>
<dbReference type="InterPro" id="IPR020586">
    <property type="entry name" value="PSI_PsaA/B_CS"/>
</dbReference>
<dbReference type="InterPro" id="IPR036408">
    <property type="entry name" value="PSI_PsaA/B_sf"/>
</dbReference>
<dbReference type="NCBIfam" id="TIGR01335">
    <property type="entry name" value="psaA"/>
    <property type="match status" value="1"/>
</dbReference>
<dbReference type="PANTHER" id="PTHR30128">
    <property type="entry name" value="OUTER MEMBRANE PROTEIN, OMPA-RELATED"/>
    <property type="match status" value="1"/>
</dbReference>
<dbReference type="PANTHER" id="PTHR30128:SF19">
    <property type="entry name" value="PHOTOSYSTEM I P700 CHLOROPHYLL A APOPROTEIN A1-RELATED"/>
    <property type="match status" value="1"/>
</dbReference>
<dbReference type="Pfam" id="PF00223">
    <property type="entry name" value="PsaA_PsaB"/>
    <property type="match status" value="1"/>
</dbReference>
<dbReference type="PIRSF" id="PIRSF002905">
    <property type="entry name" value="PSI_A"/>
    <property type="match status" value="1"/>
</dbReference>
<dbReference type="PRINTS" id="PR00257">
    <property type="entry name" value="PHOTSYSPSAAB"/>
</dbReference>
<dbReference type="SUPFAM" id="SSF81558">
    <property type="entry name" value="Photosystem I subunits PsaA/PsaB"/>
    <property type="match status" value="1"/>
</dbReference>
<dbReference type="PROSITE" id="PS00419">
    <property type="entry name" value="PHOTOSYSTEM_I_PSAAB"/>
    <property type="match status" value="1"/>
</dbReference>
<keyword id="KW-0004">4Fe-4S</keyword>
<keyword id="KW-0148">Chlorophyll</keyword>
<keyword id="KW-0150">Chloroplast</keyword>
<keyword id="KW-0157">Chromophore</keyword>
<keyword id="KW-0249">Electron transport</keyword>
<keyword id="KW-0408">Iron</keyword>
<keyword id="KW-0411">Iron-sulfur</keyword>
<keyword id="KW-0460">Magnesium</keyword>
<keyword id="KW-0472">Membrane</keyword>
<keyword id="KW-0479">Metal-binding</keyword>
<keyword id="KW-0560">Oxidoreductase</keyword>
<keyword id="KW-0602">Photosynthesis</keyword>
<keyword id="KW-0603">Photosystem I</keyword>
<keyword id="KW-0934">Plastid</keyword>
<keyword id="KW-0793">Thylakoid</keyword>
<keyword id="KW-0812">Transmembrane</keyword>
<keyword id="KW-1133">Transmembrane helix</keyword>
<keyword id="KW-0813">Transport</keyword>
<protein>
    <recommendedName>
        <fullName evidence="1">Photosystem I P700 chlorophyll a apoprotein A1</fullName>
        <ecNumber evidence="1">1.97.1.12</ecNumber>
    </recommendedName>
    <alternativeName>
        <fullName evidence="1">PSI-A</fullName>
    </alternativeName>
    <alternativeName>
        <fullName evidence="1">PsaA</fullName>
    </alternativeName>
</protein>
<geneLocation type="chloroplast"/>
<accession>Q4G3F6</accession>
<evidence type="ECO:0000255" key="1">
    <source>
        <dbReference type="HAMAP-Rule" id="MF_00458"/>
    </source>
</evidence>
<comment type="function">
    <text>PsaA and PsaB bind P700, the primary electron donor of photosystem I (PSI), as well as the electron acceptors A0, A1 and FX. PSI is a plastocyanin/cytochrome c6-ferredoxin oxidoreductase, converting photonic excitation into a charge separation, which transfers an electron from the donor P700 chlorophyll pair to the spectroscopically characterized acceptors A0, A1, FX, FA and FB in turn. Oxidized P700 is reduced on the lumenal side of the thylakoid membrane by plastocyanin or cytochrome c6.</text>
</comment>
<comment type="catalytic activity">
    <reaction evidence="1">
        <text>reduced [plastocyanin] + hnu + oxidized [2Fe-2S]-[ferredoxin] = oxidized [plastocyanin] + reduced [2Fe-2S]-[ferredoxin]</text>
        <dbReference type="Rhea" id="RHEA:30407"/>
        <dbReference type="Rhea" id="RHEA-COMP:10000"/>
        <dbReference type="Rhea" id="RHEA-COMP:10001"/>
        <dbReference type="Rhea" id="RHEA-COMP:10039"/>
        <dbReference type="Rhea" id="RHEA-COMP:10040"/>
        <dbReference type="ChEBI" id="CHEBI:29036"/>
        <dbReference type="ChEBI" id="CHEBI:30212"/>
        <dbReference type="ChEBI" id="CHEBI:33737"/>
        <dbReference type="ChEBI" id="CHEBI:33738"/>
        <dbReference type="ChEBI" id="CHEBI:49552"/>
        <dbReference type="EC" id="1.97.1.12"/>
    </reaction>
</comment>
<comment type="cofactor">
    <text evidence="1">P700 is a chlorophyll a/chlorophyll a' dimer, A0 is one or more chlorophyll a, A1 is one or both phylloquinones and FX is a shared 4Fe-4S iron-sulfur center.</text>
</comment>
<comment type="subunit">
    <text evidence="1">The PsaA/B heterodimer binds the P700 chlorophyll special pair and subsequent electron acceptors. PSI consists of a core antenna complex that captures photons, and an electron transfer chain that converts photonic excitation into a charge separation. The eukaryotic PSI reaction center is composed of at least 11 subunits.</text>
</comment>
<comment type="subcellular location">
    <subcellularLocation>
        <location evidence="1">Plastid</location>
        <location evidence="1">Chloroplast thylakoid membrane</location>
        <topology evidence="1">Multi-pass membrane protein</topology>
    </subcellularLocation>
</comment>
<comment type="similarity">
    <text evidence="1">Belongs to the PsaA/PsaB family.</text>
</comment>
<gene>
    <name evidence="1" type="primary">psaA</name>
</gene>
<reference key="1">
    <citation type="journal article" date="2006" name="J. Mol. Evol.">
        <title>Rate variation as a function of gene origin in plastid-derived genes of peridinin-containing dinoflagellates.</title>
        <authorList>
            <person name="Bachvaroff T.R."/>
            <person name="Sanchez-Puerta M.V."/>
            <person name="Delwiche C.F."/>
        </authorList>
    </citation>
    <scope>NUCLEOTIDE SEQUENCE [GENOMIC DNA]</scope>
    <source>
        <strain>CCMP373 / CSIRO-CS-57 / BT6</strain>
    </source>
</reference>
<reference key="2">
    <citation type="journal article" date="2005" name="DNA Res.">
        <title>The complete plastid genome sequence of the haptophyte Emiliania huxleyi: a comparison to other plastid genomes.</title>
        <authorList>
            <person name="Sanchez-Puerta M.V."/>
            <person name="Bachvaroff T.R."/>
            <person name="Delwiche C.F."/>
        </authorList>
    </citation>
    <scope>NUCLEOTIDE SEQUENCE [LARGE SCALE GENOMIC DNA]</scope>
    <source>
        <strain>CCMP373 / CSIRO-CS-57 / BT6</strain>
    </source>
</reference>